<accession>O27731</accession>
<name>HMT2_METTH</name>
<sequence>MAELPIAPVGRIIKNAGAQRISDDAREALAKILEEKGEEIAKEAVKLAKHAGRKTVKASDIELAAKKL</sequence>
<evidence type="ECO:0000250" key="1"/>
<evidence type="ECO:0000250" key="2">
    <source>
        <dbReference type="UniProtKB" id="P19267"/>
    </source>
</evidence>
<evidence type="ECO:0000250" key="3">
    <source>
        <dbReference type="UniProtKB" id="P50483"/>
    </source>
</evidence>
<evidence type="ECO:0000305" key="4"/>
<dbReference type="EMBL" id="AE000666">
    <property type="protein sequence ID" value="AAB86168.1"/>
    <property type="molecule type" value="Genomic_DNA"/>
</dbReference>
<dbReference type="PIR" id="G69093">
    <property type="entry name" value="G69093"/>
</dbReference>
<dbReference type="RefSeq" id="WP_010877303.1">
    <property type="nucleotide sequence ID" value="NC_000916.1"/>
</dbReference>
<dbReference type="SMR" id="O27731"/>
<dbReference type="FunCoup" id="O27731">
    <property type="interactions" value="2"/>
</dbReference>
<dbReference type="STRING" id="187420.MTH_1696"/>
<dbReference type="PaxDb" id="187420-MTH_1696"/>
<dbReference type="EnsemblBacteria" id="AAB86168">
    <property type="protein sequence ID" value="AAB86168"/>
    <property type="gene ID" value="MTH_1696"/>
</dbReference>
<dbReference type="GeneID" id="77404087"/>
<dbReference type="KEGG" id="mth:MTH_1696"/>
<dbReference type="PATRIC" id="fig|187420.15.peg.1656"/>
<dbReference type="HOGENOM" id="CLU_192667_0_0_2"/>
<dbReference type="InParanoid" id="O27731"/>
<dbReference type="Proteomes" id="UP000005223">
    <property type="component" value="Chromosome"/>
</dbReference>
<dbReference type="GO" id="GO:0005694">
    <property type="term" value="C:chromosome"/>
    <property type="evidence" value="ECO:0007669"/>
    <property type="project" value="UniProtKB-SubCell"/>
</dbReference>
<dbReference type="GO" id="GO:0005737">
    <property type="term" value="C:cytoplasm"/>
    <property type="evidence" value="ECO:0007669"/>
    <property type="project" value="UniProtKB-SubCell"/>
</dbReference>
<dbReference type="GO" id="GO:0003677">
    <property type="term" value="F:DNA binding"/>
    <property type="evidence" value="ECO:0007669"/>
    <property type="project" value="UniProtKB-KW"/>
</dbReference>
<dbReference type="GO" id="GO:0046982">
    <property type="term" value="F:protein heterodimerization activity"/>
    <property type="evidence" value="ECO:0007669"/>
    <property type="project" value="InterPro"/>
</dbReference>
<dbReference type="CDD" id="cd22909">
    <property type="entry name" value="HFD_archaea_histone-like"/>
    <property type="match status" value="1"/>
</dbReference>
<dbReference type="Gene3D" id="1.10.20.10">
    <property type="entry name" value="Histone, subunit A"/>
    <property type="match status" value="1"/>
</dbReference>
<dbReference type="InterPro" id="IPR050947">
    <property type="entry name" value="Archaeal_histone_HMF"/>
</dbReference>
<dbReference type="InterPro" id="IPR003958">
    <property type="entry name" value="CBFA_NFYB_domain"/>
</dbReference>
<dbReference type="InterPro" id="IPR009072">
    <property type="entry name" value="Histone-fold"/>
</dbReference>
<dbReference type="InterPro" id="IPR050004">
    <property type="entry name" value="HmfB-like"/>
</dbReference>
<dbReference type="InterPro" id="IPR004823">
    <property type="entry name" value="TAF_TATA-bd_Histone-like_dom"/>
</dbReference>
<dbReference type="NCBIfam" id="NF043032">
    <property type="entry name" value="archaea_histone"/>
    <property type="match status" value="1"/>
</dbReference>
<dbReference type="PANTHER" id="PTHR47828">
    <property type="entry name" value="ARCHAEAL HISTONE A"/>
    <property type="match status" value="1"/>
</dbReference>
<dbReference type="PANTHER" id="PTHR47828:SF1">
    <property type="entry name" value="ARCHAEAL HISTONE A"/>
    <property type="match status" value="1"/>
</dbReference>
<dbReference type="Pfam" id="PF00808">
    <property type="entry name" value="CBFD_NFYB_HMF"/>
    <property type="match status" value="1"/>
</dbReference>
<dbReference type="SMART" id="SM00803">
    <property type="entry name" value="TAF"/>
    <property type="match status" value="1"/>
</dbReference>
<dbReference type="SUPFAM" id="SSF47113">
    <property type="entry name" value="Histone-fold"/>
    <property type="match status" value="1"/>
</dbReference>
<proteinExistence type="inferred from homology"/>
<gene>
    <name type="primary">hmtA2</name>
    <name type="ordered locus">MTH_1696</name>
</gene>
<organism>
    <name type="scientific">Methanothermobacter thermautotrophicus (strain ATCC 29096 / DSM 1053 / JCM 10044 / NBRC 100330 / Delta H)</name>
    <name type="common">Methanobacterium thermoautotrophicum</name>
    <dbReference type="NCBI Taxonomy" id="187420"/>
    <lineage>
        <taxon>Archaea</taxon>
        <taxon>Methanobacteriati</taxon>
        <taxon>Methanobacteriota</taxon>
        <taxon>Methanomada group</taxon>
        <taxon>Methanobacteria</taxon>
        <taxon>Methanobacteriales</taxon>
        <taxon>Methanobacteriaceae</taxon>
        <taxon>Methanothermobacter</taxon>
    </lineage>
</organism>
<reference key="1">
    <citation type="journal article" date="1997" name="J. Bacteriol.">
        <title>Complete genome sequence of Methanobacterium thermoautotrophicum deltaH: functional analysis and comparative genomics.</title>
        <authorList>
            <person name="Smith D.R."/>
            <person name="Doucette-Stamm L.A."/>
            <person name="Deloughery C."/>
            <person name="Lee H.-M."/>
            <person name="Dubois J."/>
            <person name="Aldredge T."/>
            <person name="Bashirzadeh R."/>
            <person name="Blakely D."/>
            <person name="Cook R."/>
            <person name="Gilbert K."/>
            <person name="Harrison D."/>
            <person name="Hoang L."/>
            <person name="Keagle P."/>
            <person name="Lumm W."/>
            <person name="Pothier B."/>
            <person name="Qiu D."/>
            <person name="Spadafora R."/>
            <person name="Vicare R."/>
            <person name="Wang Y."/>
            <person name="Wierzbowski J."/>
            <person name="Gibson R."/>
            <person name="Jiwani N."/>
            <person name="Caruso A."/>
            <person name="Bush D."/>
            <person name="Safer H."/>
            <person name="Patwell D."/>
            <person name="Prabhakar S."/>
            <person name="McDougall S."/>
            <person name="Shimer G."/>
            <person name="Goyal A."/>
            <person name="Pietrovski S."/>
            <person name="Church G.M."/>
            <person name="Daniels C.J."/>
            <person name="Mao J.-I."/>
            <person name="Rice P."/>
            <person name="Noelling J."/>
            <person name="Reeve J.N."/>
        </authorList>
    </citation>
    <scope>NUCLEOTIDE SEQUENCE [LARGE SCALE GENOMIC DNA]</scope>
    <source>
        <strain>ATCC 29096 / DSM 1053 / JCM 10044 / NBRC 100330 / Delta H</strain>
    </source>
</reference>
<protein>
    <recommendedName>
        <fullName>DNA-binding protein HMt-1.2</fullName>
    </recommendedName>
    <alternativeName>
        <fullName>Archaeal histone A2</fullName>
    </alternativeName>
</protein>
<comment type="function">
    <text evidence="3">Binds and compacts DNA (95 to 150 base pairs) to form nucleosome-like structures that contain positive DNA supercoils.</text>
</comment>
<comment type="subunit">
    <text evidence="2 3">Homodimer or heterodimer with HmtB (By similarity). Dimers then assemble into higher oligomers, with the DNA wrapped around the protein core (By similarity).</text>
</comment>
<comment type="subcellular location">
    <subcellularLocation>
        <location evidence="3">Cytoplasm</location>
    </subcellularLocation>
    <subcellularLocation>
        <location evidence="3">Chromosome</location>
    </subcellularLocation>
</comment>
<comment type="similarity">
    <text evidence="4">Belongs to the archaeal histone HMF family.</text>
</comment>
<keyword id="KW-0158">Chromosome</keyword>
<keyword id="KW-0963">Cytoplasm</keyword>
<keyword id="KW-0238">DNA-binding</keyword>
<keyword id="KW-1185">Reference proteome</keyword>
<feature type="initiator methionine" description="Removed" evidence="1">
    <location>
        <position position="1"/>
    </location>
</feature>
<feature type="chain" id="PRO_0000154992" description="DNA-binding protein HMt-1.2">
    <location>
        <begin position="2"/>
        <end position="68"/>
    </location>
</feature>
<feature type="region of interest" description="Interaction with DNA" evidence="2">
    <location>
        <begin position="20"/>
        <end position="22"/>
    </location>
</feature>
<feature type="region of interest" description="Interaction with DNA" evidence="2">
    <location>
        <begin position="54"/>
        <end position="57"/>
    </location>
</feature>
<feature type="site" description="Interaction with DNA" evidence="2">
    <location>
        <position position="14"/>
    </location>
</feature>